<proteinExistence type="inferred from homology"/>
<evidence type="ECO:0000255" key="1">
    <source>
        <dbReference type="HAMAP-Rule" id="MF_00791"/>
    </source>
</evidence>
<evidence type="ECO:0000305" key="2"/>
<organism>
    <name type="scientific">Bordetella bronchiseptica (strain ATCC BAA-588 / NCTC 13252 / RB50)</name>
    <name type="common">Alcaligenes bronchisepticus</name>
    <dbReference type="NCBI Taxonomy" id="257310"/>
    <lineage>
        <taxon>Bacteria</taxon>
        <taxon>Pseudomonadati</taxon>
        <taxon>Pseudomonadota</taxon>
        <taxon>Betaproteobacteria</taxon>
        <taxon>Burkholderiales</taxon>
        <taxon>Alcaligenaceae</taxon>
        <taxon>Bordetella</taxon>
    </lineage>
</organism>
<gene>
    <name evidence="1" type="primary">apaG</name>
    <name type="ordered locus">BB4623</name>
</gene>
<accession>Q7WEL1</accession>
<dbReference type="EMBL" id="BX640451">
    <property type="protein sequence ID" value="CAE34985.1"/>
    <property type="status" value="ALT_INIT"/>
    <property type="molecule type" value="Genomic_DNA"/>
</dbReference>
<dbReference type="SMR" id="Q7WEL1"/>
<dbReference type="KEGG" id="bbr:BB4623"/>
<dbReference type="eggNOG" id="COG2967">
    <property type="taxonomic scope" value="Bacteria"/>
</dbReference>
<dbReference type="HOGENOM" id="CLU_128074_0_0_4"/>
<dbReference type="Proteomes" id="UP000001027">
    <property type="component" value="Chromosome"/>
</dbReference>
<dbReference type="Gene3D" id="2.60.40.1470">
    <property type="entry name" value="ApaG domain"/>
    <property type="match status" value="1"/>
</dbReference>
<dbReference type="HAMAP" id="MF_00791">
    <property type="entry name" value="ApaG"/>
    <property type="match status" value="1"/>
</dbReference>
<dbReference type="InterPro" id="IPR050718">
    <property type="entry name" value="ApaG-like"/>
</dbReference>
<dbReference type="InterPro" id="IPR007474">
    <property type="entry name" value="ApaG_domain"/>
</dbReference>
<dbReference type="InterPro" id="IPR036767">
    <property type="entry name" value="ApaG_sf"/>
</dbReference>
<dbReference type="InterPro" id="IPR023065">
    <property type="entry name" value="Uncharacterised_ApaG"/>
</dbReference>
<dbReference type="NCBIfam" id="NF003967">
    <property type="entry name" value="PRK05461.1"/>
    <property type="match status" value="1"/>
</dbReference>
<dbReference type="PANTHER" id="PTHR47191">
    <property type="entry name" value="OS05G0170800 PROTEIN"/>
    <property type="match status" value="1"/>
</dbReference>
<dbReference type="PANTHER" id="PTHR47191:SF2">
    <property type="entry name" value="OS05G0170800 PROTEIN"/>
    <property type="match status" value="1"/>
</dbReference>
<dbReference type="Pfam" id="PF04379">
    <property type="entry name" value="DUF525"/>
    <property type="match status" value="1"/>
</dbReference>
<dbReference type="SUPFAM" id="SSF110069">
    <property type="entry name" value="ApaG-like"/>
    <property type="match status" value="1"/>
</dbReference>
<dbReference type="PROSITE" id="PS51087">
    <property type="entry name" value="APAG"/>
    <property type="match status" value="1"/>
</dbReference>
<comment type="sequence caution" evidence="2">
    <conflict type="erroneous initiation">
        <sequence resource="EMBL-CDS" id="CAE34985"/>
    </conflict>
</comment>
<reference key="1">
    <citation type="journal article" date="2003" name="Nat. Genet.">
        <title>Comparative analysis of the genome sequences of Bordetella pertussis, Bordetella parapertussis and Bordetella bronchiseptica.</title>
        <authorList>
            <person name="Parkhill J."/>
            <person name="Sebaihia M."/>
            <person name="Preston A."/>
            <person name="Murphy L.D."/>
            <person name="Thomson N.R."/>
            <person name="Harris D.E."/>
            <person name="Holden M.T.G."/>
            <person name="Churcher C.M."/>
            <person name="Bentley S.D."/>
            <person name="Mungall K.L."/>
            <person name="Cerdeno-Tarraga A.-M."/>
            <person name="Temple L."/>
            <person name="James K.D."/>
            <person name="Harris B."/>
            <person name="Quail M.A."/>
            <person name="Achtman M."/>
            <person name="Atkin R."/>
            <person name="Baker S."/>
            <person name="Basham D."/>
            <person name="Bason N."/>
            <person name="Cherevach I."/>
            <person name="Chillingworth T."/>
            <person name="Collins M."/>
            <person name="Cronin A."/>
            <person name="Davis P."/>
            <person name="Doggett J."/>
            <person name="Feltwell T."/>
            <person name="Goble A."/>
            <person name="Hamlin N."/>
            <person name="Hauser H."/>
            <person name="Holroyd S."/>
            <person name="Jagels K."/>
            <person name="Leather S."/>
            <person name="Moule S."/>
            <person name="Norberczak H."/>
            <person name="O'Neil S."/>
            <person name="Ormond D."/>
            <person name="Price C."/>
            <person name="Rabbinowitsch E."/>
            <person name="Rutter S."/>
            <person name="Sanders M."/>
            <person name="Saunders D."/>
            <person name="Seeger K."/>
            <person name="Sharp S."/>
            <person name="Simmonds M."/>
            <person name="Skelton J."/>
            <person name="Squares R."/>
            <person name="Squares S."/>
            <person name="Stevens K."/>
            <person name="Unwin L."/>
            <person name="Whitehead S."/>
            <person name="Barrell B.G."/>
            <person name="Maskell D.J."/>
        </authorList>
    </citation>
    <scope>NUCLEOTIDE SEQUENCE [LARGE SCALE GENOMIC DNA]</scope>
    <source>
        <strain>ATCC BAA-588 / NCTC 13252 / RB50</strain>
    </source>
</reference>
<name>APAG_BORBR</name>
<protein>
    <recommendedName>
        <fullName evidence="1">Protein ApaG</fullName>
    </recommendedName>
</protein>
<sequence>MSNRERPVKPYDLTVSVTPRYVPEQSDPSQQQYVFAYTVRITNTGSHPAQVISRHWIITDGEERVQEVRGLGVVGQQPLLAPGETFEYTSGCPLPTPIGTMRGTYHCVGENGIPFEVPIAEFLLAMPRTLH</sequence>
<feature type="chain" id="PRO_0000197938" description="Protein ApaG">
    <location>
        <begin position="1"/>
        <end position="131"/>
    </location>
</feature>
<feature type="domain" description="ApaG" evidence="1">
    <location>
        <begin position="7"/>
        <end position="131"/>
    </location>
</feature>